<reference key="1">
    <citation type="journal article" date="2009" name="PLoS Genet.">
        <title>Organised genome dynamics in the Escherichia coli species results in highly diverse adaptive paths.</title>
        <authorList>
            <person name="Touchon M."/>
            <person name="Hoede C."/>
            <person name="Tenaillon O."/>
            <person name="Barbe V."/>
            <person name="Baeriswyl S."/>
            <person name="Bidet P."/>
            <person name="Bingen E."/>
            <person name="Bonacorsi S."/>
            <person name="Bouchier C."/>
            <person name="Bouvet O."/>
            <person name="Calteau A."/>
            <person name="Chiapello H."/>
            <person name="Clermont O."/>
            <person name="Cruveiller S."/>
            <person name="Danchin A."/>
            <person name="Diard M."/>
            <person name="Dossat C."/>
            <person name="Karoui M.E."/>
            <person name="Frapy E."/>
            <person name="Garry L."/>
            <person name="Ghigo J.M."/>
            <person name="Gilles A.M."/>
            <person name="Johnson J."/>
            <person name="Le Bouguenec C."/>
            <person name="Lescat M."/>
            <person name="Mangenot S."/>
            <person name="Martinez-Jehanne V."/>
            <person name="Matic I."/>
            <person name="Nassif X."/>
            <person name="Oztas S."/>
            <person name="Petit M.A."/>
            <person name="Pichon C."/>
            <person name="Rouy Z."/>
            <person name="Ruf C.S."/>
            <person name="Schneider D."/>
            <person name="Tourret J."/>
            <person name="Vacherie B."/>
            <person name="Vallenet D."/>
            <person name="Medigue C."/>
            <person name="Rocha E.P.C."/>
            <person name="Denamur E."/>
        </authorList>
    </citation>
    <scope>NUCLEOTIDE SEQUENCE [LARGE SCALE GENOMIC DNA]</scope>
    <source>
        <strain>UMN026 / ExPEC</strain>
    </source>
</reference>
<sequence length="482" mass="54973">MKFIIKLFPEITIKSQSVRLRFIKILTGNIRNVLKHYDETLAVVRHWDNIEVRAKDENQRLAIRDALTRIPGIHHILEVEDVPFTDMHDIFEKALVQYRDQLEGKTFCVRVKRRGKHDFSSIDVERYVGGGLNQHIESARVKLTNPDVTVHLEVEDDRLLLIKGRYEGIGGFPIGTQEDVLSLISGGFDSGVSSYMLMRRGCRVHYCFFNLGGAAHEIGVRQVAHYLWNRFGSSHRVRFVAINFEPVVGEILEKIDDGQMGVILKRMMVRAASKVAERYGVQALVTGEALGQVSSQTLTNLRLIDNVSDTLILRPLISYDKEHIINLARQIGTEDFARTMPEYCGVISKSPTVKAVKSKIEAEEEKFDFSILDKVVEEANNVDIREIAQQTEQEVVEVETVNGFGPNDVILDIRSIDEQEDKPLKVEGIDVVSLPFYKLSTKFGDLDQNKTWLLWCERGVMSRLQALYLREQGFNNVKVYRP</sequence>
<dbReference type="EC" id="2.8.1.4" evidence="1"/>
<dbReference type="EMBL" id="CU928163">
    <property type="protein sequence ID" value="CAR11677.1"/>
    <property type="molecule type" value="Genomic_DNA"/>
</dbReference>
<dbReference type="RefSeq" id="WP_000668662.1">
    <property type="nucleotide sequence ID" value="NC_011751.1"/>
</dbReference>
<dbReference type="RefSeq" id="YP_002411225.1">
    <property type="nucleotide sequence ID" value="NC_011751.1"/>
</dbReference>
<dbReference type="SMR" id="B7N8X6"/>
<dbReference type="STRING" id="585056.ECUMN_0462"/>
<dbReference type="KEGG" id="eum:ECUMN_0462"/>
<dbReference type="PATRIC" id="fig|585056.7.peg.666"/>
<dbReference type="HOGENOM" id="CLU_037952_4_1_6"/>
<dbReference type="UniPathway" id="UPA00060"/>
<dbReference type="Proteomes" id="UP000007097">
    <property type="component" value="Chromosome"/>
</dbReference>
<dbReference type="GO" id="GO:0005829">
    <property type="term" value="C:cytosol"/>
    <property type="evidence" value="ECO:0007669"/>
    <property type="project" value="TreeGrafter"/>
</dbReference>
<dbReference type="GO" id="GO:0005524">
    <property type="term" value="F:ATP binding"/>
    <property type="evidence" value="ECO:0007669"/>
    <property type="project" value="UniProtKB-UniRule"/>
</dbReference>
<dbReference type="GO" id="GO:0004810">
    <property type="term" value="F:CCA tRNA nucleotidyltransferase activity"/>
    <property type="evidence" value="ECO:0007669"/>
    <property type="project" value="InterPro"/>
</dbReference>
<dbReference type="GO" id="GO:0000049">
    <property type="term" value="F:tRNA binding"/>
    <property type="evidence" value="ECO:0007669"/>
    <property type="project" value="UniProtKB-UniRule"/>
</dbReference>
<dbReference type="GO" id="GO:0140741">
    <property type="term" value="F:tRNA-uracil-4 sulfurtransferase activity"/>
    <property type="evidence" value="ECO:0007669"/>
    <property type="project" value="UniProtKB-EC"/>
</dbReference>
<dbReference type="GO" id="GO:0009228">
    <property type="term" value="P:thiamine biosynthetic process"/>
    <property type="evidence" value="ECO:0007669"/>
    <property type="project" value="UniProtKB-KW"/>
</dbReference>
<dbReference type="GO" id="GO:0009229">
    <property type="term" value="P:thiamine diphosphate biosynthetic process"/>
    <property type="evidence" value="ECO:0007669"/>
    <property type="project" value="UniProtKB-UniRule"/>
</dbReference>
<dbReference type="GO" id="GO:0052837">
    <property type="term" value="P:thiazole biosynthetic process"/>
    <property type="evidence" value="ECO:0007669"/>
    <property type="project" value="InterPro"/>
</dbReference>
<dbReference type="GO" id="GO:0002937">
    <property type="term" value="P:tRNA 4-thiouridine biosynthesis"/>
    <property type="evidence" value="ECO:0007669"/>
    <property type="project" value="TreeGrafter"/>
</dbReference>
<dbReference type="CDD" id="cd01712">
    <property type="entry name" value="PPase_ThiI"/>
    <property type="match status" value="1"/>
</dbReference>
<dbReference type="CDD" id="cd00158">
    <property type="entry name" value="RHOD"/>
    <property type="match status" value="1"/>
</dbReference>
<dbReference type="CDD" id="cd11716">
    <property type="entry name" value="THUMP_ThiI"/>
    <property type="match status" value="1"/>
</dbReference>
<dbReference type="FunFam" id="3.30.2130.30:FF:000002">
    <property type="entry name" value="tRNA sulfurtransferase"/>
    <property type="match status" value="1"/>
</dbReference>
<dbReference type="FunFam" id="3.40.250.10:FF:000003">
    <property type="entry name" value="tRNA sulfurtransferase"/>
    <property type="match status" value="1"/>
</dbReference>
<dbReference type="FunFam" id="3.40.50.620:FF:000029">
    <property type="entry name" value="tRNA sulfurtransferase"/>
    <property type="match status" value="1"/>
</dbReference>
<dbReference type="Gene3D" id="3.30.2130.30">
    <property type="match status" value="1"/>
</dbReference>
<dbReference type="Gene3D" id="3.40.50.620">
    <property type="entry name" value="HUPs"/>
    <property type="match status" value="1"/>
</dbReference>
<dbReference type="Gene3D" id="3.40.250.10">
    <property type="entry name" value="Rhodanese-like domain"/>
    <property type="match status" value="1"/>
</dbReference>
<dbReference type="HAMAP" id="MF_00021">
    <property type="entry name" value="ThiI"/>
    <property type="match status" value="1"/>
</dbReference>
<dbReference type="InterPro" id="IPR001763">
    <property type="entry name" value="Rhodanese-like_dom"/>
</dbReference>
<dbReference type="InterPro" id="IPR036873">
    <property type="entry name" value="Rhodanese-like_dom_sf"/>
</dbReference>
<dbReference type="InterPro" id="IPR014729">
    <property type="entry name" value="Rossmann-like_a/b/a_fold"/>
</dbReference>
<dbReference type="InterPro" id="IPR020536">
    <property type="entry name" value="ThiI_AANH"/>
</dbReference>
<dbReference type="InterPro" id="IPR054173">
    <property type="entry name" value="ThiI_fer"/>
</dbReference>
<dbReference type="InterPro" id="IPR049961">
    <property type="entry name" value="ThiI_N"/>
</dbReference>
<dbReference type="InterPro" id="IPR026340">
    <property type="entry name" value="THII_Thiazole_biosynth_dom"/>
</dbReference>
<dbReference type="InterPro" id="IPR004114">
    <property type="entry name" value="THUMP_dom"/>
</dbReference>
<dbReference type="InterPro" id="IPR049962">
    <property type="entry name" value="THUMP_ThiI"/>
</dbReference>
<dbReference type="InterPro" id="IPR003720">
    <property type="entry name" value="tRNA_STrfase"/>
</dbReference>
<dbReference type="InterPro" id="IPR050102">
    <property type="entry name" value="tRNA_sulfurtransferase_ThiI"/>
</dbReference>
<dbReference type="NCBIfam" id="TIGR04271">
    <property type="entry name" value="ThiI_C_thiazole"/>
    <property type="match status" value="1"/>
</dbReference>
<dbReference type="NCBIfam" id="TIGR00342">
    <property type="entry name" value="tRNA uracil 4-sulfurtransferase ThiI"/>
    <property type="match status" value="1"/>
</dbReference>
<dbReference type="PANTHER" id="PTHR43209">
    <property type="entry name" value="TRNA SULFURTRANSFERASE"/>
    <property type="match status" value="1"/>
</dbReference>
<dbReference type="PANTHER" id="PTHR43209:SF1">
    <property type="entry name" value="TRNA SULFURTRANSFERASE"/>
    <property type="match status" value="1"/>
</dbReference>
<dbReference type="Pfam" id="PF02568">
    <property type="entry name" value="ThiI"/>
    <property type="match status" value="1"/>
</dbReference>
<dbReference type="Pfam" id="PF22025">
    <property type="entry name" value="ThiI_fer"/>
    <property type="match status" value="1"/>
</dbReference>
<dbReference type="Pfam" id="PF02926">
    <property type="entry name" value="THUMP"/>
    <property type="match status" value="1"/>
</dbReference>
<dbReference type="SMART" id="SM00981">
    <property type="entry name" value="THUMP"/>
    <property type="match status" value="1"/>
</dbReference>
<dbReference type="SUPFAM" id="SSF52402">
    <property type="entry name" value="Adenine nucleotide alpha hydrolases-like"/>
    <property type="match status" value="1"/>
</dbReference>
<dbReference type="SUPFAM" id="SSF52821">
    <property type="entry name" value="Rhodanese/Cell cycle control phosphatase"/>
    <property type="match status" value="1"/>
</dbReference>
<dbReference type="SUPFAM" id="SSF143437">
    <property type="entry name" value="THUMP domain-like"/>
    <property type="match status" value="1"/>
</dbReference>
<dbReference type="PROSITE" id="PS50206">
    <property type="entry name" value="RHODANESE_3"/>
    <property type="match status" value="1"/>
</dbReference>
<dbReference type="PROSITE" id="PS51165">
    <property type="entry name" value="THUMP"/>
    <property type="match status" value="1"/>
</dbReference>
<organism>
    <name type="scientific">Escherichia coli O17:K52:H18 (strain UMN026 / ExPEC)</name>
    <dbReference type="NCBI Taxonomy" id="585056"/>
    <lineage>
        <taxon>Bacteria</taxon>
        <taxon>Pseudomonadati</taxon>
        <taxon>Pseudomonadota</taxon>
        <taxon>Gammaproteobacteria</taxon>
        <taxon>Enterobacterales</taxon>
        <taxon>Enterobacteriaceae</taxon>
        <taxon>Escherichia</taxon>
    </lineage>
</organism>
<keyword id="KW-0067">ATP-binding</keyword>
<keyword id="KW-0963">Cytoplasm</keyword>
<keyword id="KW-1015">Disulfide bond</keyword>
<keyword id="KW-0547">Nucleotide-binding</keyword>
<keyword id="KW-0676">Redox-active center</keyword>
<keyword id="KW-0694">RNA-binding</keyword>
<keyword id="KW-0784">Thiamine biosynthesis</keyword>
<keyword id="KW-0808">Transferase</keyword>
<keyword id="KW-0820">tRNA-binding</keyword>
<protein>
    <recommendedName>
        <fullName evidence="1">tRNA sulfurtransferase</fullName>
        <ecNumber evidence="1">2.8.1.4</ecNumber>
    </recommendedName>
    <alternativeName>
        <fullName evidence="1">Sulfur carrier protein ThiS sulfurtransferase</fullName>
    </alternativeName>
    <alternativeName>
        <fullName evidence="1">Thiamine biosynthesis protein ThiI</fullName>
    </alternativeName>
    <alternativeName>
        <fullName evidence="1">tRNA 4-thiouridine synthase</fullName>
    </alternativeName>
</protein>
<comment type="function">
    <text evidence="1">Catalyzes the ATP-dependent transfer of a sulfur to tRNA to produce 4-thiouridine in position 8 of tRNAs, which functions as a near-UV photosensor. Also catalyzes the transfer of sulfur to the sulfur carrier protein ThiS, forming ThiS-thiocarboxylate. This is a step in the synthesis of thiazole, in the thiamine biosynthesis pathway. The sulfur is donated as persulfide by IscS.</text>
</comment>
<comment type="catalytic activity">
    <reaction evidence="1">
        <text>[ThiI sulfur-carrier protein]-S-sulfanyl-L-cysteine + a uridine in tRNA + 2 reduced [2Fe-2S]-[ferredoxin] + ATP + H(+) = [ThiI sulfur-carrier protein]-L-cysteine + a 4-thiouridine in tRNA + 2 oxidized [2Fe-2S]-[ferredoxin] + AMP + diphosphate</text>
        <dbReference type="Rhea" id="RHEA:24176"/>
        <dbReference type="Rhea" id="RHEA-COMP:10000"/>
        <dbReference type="Rhea" id="RHEA-COMP:10001"/>
        <dbReference type="Rhea" id="RHEA-COMP:13337"/>
        <dbReference type="Rhea" id="RHEA-COMP:13338"/>
        <dbReference type="Rhea" id="RHEA-COMP:13339"/>
        <dbReference type="Rhea" id="RHEA-COMP:13340"/>
        <dbReference type="ChEBI" id="CHEBI:15378"/>
        <dbReference type="ChEBI" id="CHEBI:29950"/>
        <dbReference type="ChEBI" id="CHEBI:30616"/>
        <dbReference type="ChEBI" id="CHEBI:33019"/>
        <dbReference type="ChEBI" id="CHEBI:33737"/>
        <dbReference type="ChEBI" id="CHEBI:33738"/>
        <dbReference type="ChEBI" id="CHEBI:61963"/>
        <dbReference type="ChEBI" id="CHEBI:65315"/>
        <dbReference type="ChEBI" id="CHEBI:136798"/>
        <dbReference type="ChEBI" id="CHEBI:456215"/>
        <dbReference type="EC" id="2.8.1.4"/>
    </reaction>
</comment>
<comment type="catalytic activity">
    <reaction evidence="1">
        <text>[ThiS sulfur-carrier protein]-C-terminal Gly-Gly-AMP + S-sulfanyl-L-cysteinyl-[cysteine desulfurase] + AH2 = [ThiS sulfur-carrier protein]-C-terminal-Gly-aminoethanethioate + L-cysteinyl-[cysteine desulfurase] + A + AMP + 2 H(+)</text>
        <dbReference type="Rhea" id="RHEA:43340"/>
        <dbReference type="Rhea" id="RHEA-COMP:12157"/>
        <dbReference type="Rhea" id="RHEA-COMP:12158"/>
        <dbReference type="Rhea" id="RHEA-COMP:12910"/>
        <dbReference type="Rhea" id="RHEA-COMP:19908"/>
        <dbReference type="ChEBI" id="CHEBI:13193"/>
        <dbReference type="ChEBI" id="CHEBI:15378"/>
        <dbReference type="ChEBI" id="CHEBI:17499"/>
        <dbReference type="ChEBI" id="CHEBI:29950"/>
        <dbReference type="ChEBI" id="CHEBI:61963"/>
        <dbReference type="ChEBI" id="CHEBI:90618"/>
        <dbReference type="ChEBI" id="CHEBI:232372"/>
        <dbReference type="ChEBI" id="CHEBI:456215"/>
    </reaction>
</comment>
<comment type="pathway">
    <text evidence="1">Cofactor biosynthesis; thiamine diphosphate biosynthesis.</text>
</comment>
<comment type="subcellular location">
    <subcellularLocation>
        <location evidence="1">Cytoplasm</location>
    </subcellularLocation>
</comment>
<comment type="similarity">
    <text evidence="1">Belongs to the ThiI family.</text>
</comment>
<evidence type="ECO:0000255" key="1">
    <source>
        <dbReference type="HAMAP-Rule" id="MF_00021"/>
    </source>
</evidence>
<name>THII_ECOLU</name>
<proteinExistence type="inferred from homology"/>
<accession>B7N8X6</accession>
<feature type="chain" id="PRO_1000116403" description="tRNA sulfurtransferase">
    <location>
        <begin position="1"/>
        <end position="482"/>
    </location>
</feature>
<feature type="domain" description="THUMP" evidence="1">
    <location>
        <begin position="61"/>
        <end position="165"/>
    </location>
</feature>
<feature type="domain" description="Rhodanese" evidence="1">
    <location>
        <begin position="404"/>
        <end position="482"/>
    </location>
</feature>
<feature type="active site" description="Cysteine persulfide intermediate" evidence="1">
    <location>
        <position position="456"/>
    </location>
</feature>
<feature type="binding site" evidence="1">
    <location>
        <begin position="183"/>
        <end position="184"/>
    </location>
    <ligand>
        <name>ATP</name>
        <dbReference type="ChEBI" id="CHEBI:30616"/>
    </ligand>
</feature>
<feature type="binding site" evidence="1">
    <location>
        <position position="265"/>
    </location>
    <ligand>
        <name>ATP</name>
        <dbReference type="ChEBI" id="CHEBI:30616"/>
    </ligand>
</feature>
<feature type="binding site" evidence="1">
    <location>
        <position position="287"/>
    </location>
    <ligand>
        <name>ATP</name>
        <dbReference type="ChEBI" id="CHEBI:30616"/>
    </ligand>
</feature>
<feature type="binding site" evidence="1">
    <location>
        <position position="296"/>
    </location>
    <ligand>
        <name>ATP</name>
        <dbReference type="ChEBI" id="CHEBI:30616"/>
    </ligand>
</feature>
<feature type="disulfide bond" description="Redox-active" evidence="1">
    <location>
        <begin position="344"/>
        <end position="456"/>
    </location>
</feature>
<gene>
    <name evidence="1" type="primary">thiI</name>
    <name type="ordered locus">ECUMN_0462</name>
</gene>